<keyword id="KW-0456">Lyase</keyword>
<keyword id="KW-0672">Quinate metabolism</keyword>
<dbReference type="EC" id="4.2.1.10" evidence="1"/>
<dbReference type="EMBL" id="FM992689">
    <property type="protein sequence ID" value="CAX43934.1"/>
    <property type="molecule type" value="Genomic_DNA"/>
</dbReference>
<dbReference type="SMR" id="B9WC12"/>
<dbReference type="KEGG" id="cdu:CD36_21530"/>
<dbReference type="CGD" id="CAL0000159237">
    <property type="gene designation" value="Cd36_21530"/>
</dbReference>
<dbReference type="VEuPathDB" id="FungiDB:CD36_21530"/>
<dbReference type="eggNOG" id="ENOG502S1A9">
    <property type="taxonomic scope" value="Eukaryota"/>
</dbReference>
<dbReference type="HOGENOM" id="CLU_090968_1_0_1"/>
<dbReference type="OrthoDB" id="8191625at2759"/>
<dbReference type="UniPathway" id="UPA00088">
    <property type="reaction ID" value="UER00178"/>
</dbReference>
<dbReference type="Proteomes" id="UP000002605">
    <property type="component" value="Chromosome 2"/>
</dbReference>
<dbReference type="GO" id="GO:0003855">
    <property type="term" value="F:3-dehydroquinate dehydratase activity"/>
    <property type="evidence" value="ECO:0007669"/>
    <property type="project" value="UniProtKB-UniRule"/>
</dbReference>
<dbReference type="GO" id="GO:0046279">
    <property type="term" value="P:3,4-dihydroxybenzoate biosynthetic process"/>
    <property type="evidence" value="ECO:0007669"/>
    <property type="project" value="UniProtKB-UniRule"/>
</dbReference>
<dbReference type="GO" id="GO:0019631">
    <property type="term" value="P:quinate catabolic process"/>
    <property type="evidence" value="ECO:0007669"/>
    <property type="project" value="TreeGrafter"/>
</dbReference>
<dbReference type="CDD" id="cd00466">
    <property type="entry name" value="DHQase_II"/>
    <property type="match status" value="1"/>
</dbReference>
<dbReference type="Gene3D" id="3.40.50.9100">
    <property type="entry name" value="Dehydroquinase, class II"/>
    <property type="match status" value="1"/>
</dbReference>
<dbReference type="HAMAP" id="MF_00169">
    <property type="entry name" value="AroQ"/>
    <property type="match status" value="1"/>
</dbReference>
<dbReference type="InterPro" id="IPR001874">
    <property type="entry name" value="DHquinase_II"/>
</dbReference>
<dbReference type="InterPro" id="IPR018509">
    <property type="entry name" value="DHquinase_II_CS"/>
</dbReference>
<dbReference type="InterPro" id="IPR036441">
    <property type="entry name" value="DHquinase_II_sf"/>
</dbReference>
<dbReference type="NCBIfam" id="TIGR01088">
    <property type="entry name" value="aroQ"/>
    <property type="match status" value="1"/>
</dbReference>
<dbReference type="NCBIfam" id="NF003804">
    <property type="entry name" value="PRK05395.1-1"/>
    <property type="match status" value="1"/>
</dbReference>
<dbReference type="NCBIfam" id="NF003805">
    <property type="entry name" value="PRK05395.1-2"/>
    <property type="match status" value="1"/>
</dbReference>
<dbReference type="NCBIfam" id="NF003806">
    <property type="entry name" value="PRK05395.1-3"/>
    <property type="match status" value="1"/>
</dbReference>
<dbReference type="NCBIfam" id="NF003807">
    <property type="entry name" value="PRK05395.1-4"/>
    <property type="match status" value="1"/>
</dbReference>
<dbReference type="PANTHER" id="PTHR21272">
    <property type="entry name" value="CATABOLIC 3-DEHYDROQUINASE"/>
    <property type="match status" value="1"/>
</dbReference>
<dbReference type="PANTHER" id="PTHR21272:SF3">
    <property type="entry name" value="CATABOLIC 3-DEHYDROQUINASE"/>
    <property type="match status" value="1"/>
</dbReference>
<dbReference type="Pfam" id="PF01220">
    <property type="entry name" value="DHquinase_II"/>
    <property type="match status" value="1"/>
</dbReference>
<dbReference type="PIRSF" id="PIRSF001399">
    <property type="entry name" value="DHquinase_II"/>
    <property type="match status" value="1"/>
</dbReference>
<dbReference type="SUPFAM" id="SSF52304">
    <property type="entry name" value="Type II 3-dehydroquinate dehydratase"/>
    <property type="match status" value="1"/>
</dbReference>
<dbReference type="PROSITE" id="PS01029">
    <property type="entry name" value="DEHYDROQUINASE_II"/>
    <property type="match status" value="1"/>
</dbReference>
<evidence type="ECO:0000255" key="1">
    <source>
        <dbReference type="HAMAP-Rule" id="MF_03136"/>
    </source>
</evidence>
<accession>B9WC12</accession>
<proteinExistence type="inferred from homology"/>
<reference key="1">
    <citation type="journal article" date="2009" name="Genome Res.">
        <title>Comparative genomics of the fungal pathogens Candida dubliniensis and Candida albicans.</title>
        <authorList>
            <person name="Jackson A.P."/>
            <person name="Gamble J.A."/>
            <person name="Yeomans T."/>
            <person name="Moran G.P."/>
            <person name="Saunders D."/>
            <person name="Harris D."/>
            <person name="Aslett M."/>
            <person name="Barrell J.F."/>
            <person name="Butler G."/>
            <person name="Citiulo F."/>
            <person name="Coleman D.C."/>
            <person name="de Groot P.W.J."/>
            <person name="Goodwin T.J."/>
            <person name="Quail M.A."/>
            <person name="McQuillan J."/>
            <person name="Munro C.A."/>
            <person name="Pain A."/>
            <person name="Poulter R.T."/>
            <person name="Rajandream M.A."/>
            <person name="Renauld H."/>
            <person name="Spiering M.J."/>
            <person name="Tivey A."/>
            <person name="Gow N.A.R."/>
            <person name="Barrell B."/>
            <person name="Sullivan D.J."/>
            <person name="Berriman M."/>
        </authorList>
    </citation>
    <scope>NUCLEOTIDE SEQUENCE [LARGE SCALE GENOMIC DNA]</scope>
    <source>
        <strain>CD36 / ATCC MYA-646 / CBS 7987 / NCPF 3949 / NRRL Y-17841</strain>
    </source>
</reference>
<organism>
    <name type="scientific">Candida dubliniensis (strain CD36 / ATCC MYA-646 / CBS 7987 / NCPF 3949 / NRRL Y-17841)</name>
    <name type="common">Yeast</name>
    <dbReference type="NCBI Taxonomy" id="573826"/>
    <lineage>
        <taxon>Eukaryota</taxon>
        <taxon>Fungi</taxon>
        <taxon>Dikarya</taxon>
        <taxon>Ascomycota</taxon>
        <taxon>Saccharomycotina</taxon>
        <taxon>Pichiomycetes</taxon>
        <taxon>Debaryomycetaceae</taxon>
        <taxon>Candida/Lodderomyces clade</taxon>
        <taxon>Candida</taxon>
    </lineage>
</organism>
<feature type="chain" id="PRO_0000402362" description="Catabolic 3-dehydroquinase">
    <location>
        <begin position="1"/>
        <end position="146"/>
    </location>
</feature>
<feature type="active site" description="Proton acceptor" evidence="1">
    <location>
        <position position="24"/>
    </location>
</feature>
<feature type="active site" description="Proton donor" evidence="1">
    <location>
        <position position="104"/>
    </location>
</feature>
<feature type="binding site" evidence="1">
    <location>
        <position position="78"/>
    </location>
    <ligand>
        <name>substrate</name>
    </ligand>
</feature>
<feature type="binding site" evidence="1">
    <location>
        <position position="84"/>
    </location>
    <ligand>
        <name>substrate</name>
    </ligand>
</feature>
<feature type="binding site" evidence="1">
    <location>
        <position position="91"/>
    </location>
    <ligand>
        <name>substrate</name>
    </ligand>
</feature>
<feature type="binding site" evidence="1">
    <location>
        <begin position="105"/>
        <end position="106"/>
    </location>
    <ligand>
        <name>substrate</name>
    </ligand>
</feature>
<feature type="binding site" evidence="1">
    <location>
        <position position="115"/>
    </location>
    <ligand>
        <name>substrate</name>
    </ligand>
</feature>
<feature type="site" description="Transition state stabilizer" evidence="1">
    <location>
        <position position="19"/>
    </location>
</feature>
<protein>
    <recommendedName>
        <fullName evidence="1">Catabolic 3-dehydroquinase</fullName>
        <shortName evidence="1">cDHQase</shortName>
        <ecNumber evidence="1">4.2.1.10</ecNumber>
    </recommendedName>
    <alternativeName>
        <fullName evidence="1">3-dehydroquinate dehydratase</fullName>
    </alternativeName>
</protein>
<name>3DHQ_CANDC</name>
<gene>
    <name evidence="1" type="primary">DQD1</name>
    <name type="ORF">CD36_21530</name>
</gene>
<sequence length="146" mass="16076">MVKKVLLINGPNLNLLGTREPEKYGTTSLSDIEQAAIEQAKLKKNDSEVLTFQSNTEGFIIDRIHEAKRQGVGFVVINAGAYTHTSVGIRDALLGTAIPFIEVHITNVHQREPFRHQSYLSDKAVAVICGLGVYGYTAAIEYALNY</sequence>
<comment type="function">
    <text evidence="1">Is involved in the catabolism of quinate. Allows the utilization of quinate as carbon source via the beta-ketoadipate pathway.</text>
</comment>
<comment type="catalytic activity">
    <reaction evidence="1">
        <text>3-dehydroquinate = 3-dehydroshikimate + H2O</text>
        <dbReference type="Rhea" id="RHEA:21096"/>
        <dbReference type="ChEBI" id="CHEBI:15377"/>
        <dbReference type="ChEBI" id="CHEBI:16630"/>
        <dbReference type="ChEBI" id="CHEBI:32364"/>
        <dbReference type="EC" id="4.2.1.10"/>
    </reaction>
</comment>
<comment type="pathway">
    <text evidence="1">Aromatic compound metabolism; 3,4-dihydroxybenzoate biosynthesis; 3,4-dihydroxybenzoate from 3-dehydroquinate: step 1/2.</text>
</comment>
<comment type="subunit">
    <text evidence="1">Homododecamer. Adopts a ring-like structure, composed of an arrangement of two hexameric rings stacked on top of one another.</text>
</comment>
<comment type="similarity">
    <text evidence="1">Belongs to the type-II 3-dehydroquinase family.</text>
</comment>